<comment type="function">
    <text evidence="3 4">Yellow laccase-like multicopper oxidase that is able to oxidize a variety of phenolic compounds including standard laccase substrates such as 2'-azino-bis(3-ethylbenzothiazoline-6-sulphonic acid) (ABTS) and 2,6-dimethoxyphenol (2,6-DMP) (PubMed:30529567, PubMed:37326583). The existence of an ortho-hydroxy group is crucial for oxidation since pyrogallol and catechol, which contain ortho-hydroxy groups, are readily oxidized, which is not the case for resorcinol and hydroquinone, that contain meta- and para-hydroxy groups, respectively (PubMed:37326583). The same is also true for the existence of a methoxy group in an ortho-position, since 2,6-DMP, guaiacol and ferulic and caffeic acids are also rather easily oxidized compared with the corresponding unsubstituted compound (PubMed:37326583). Can be used for the bioconversion of 2',3,4-trihy-droxychalcone to 3',4'-dihydroxy-aurone, a bioactive aurone recently shown to possess inhibitory activity against several isoforms of the histone deacetylase complex (HDAC) (PubMed:30529567).</text>
</comment>
<comment type="catalytic activity">
    <reaction evidence="3">
        <text>2 2',3,4-trihydroxy-trans-chalcone + O2 + 2 H(+) = 2 3',4'-dihydroxyaurone + 2 H2O</text>
        <dbReference type="Rhea" id="RHEA:63848"/>
        <dbReference type="ChEBI" id="CHEBI:15377"/>
        <dbReference type="ChEBI" id="CHEBI:15378"/>
        <dbReference type="ChEBI" id="CHEBI:15379"/>
        <dbReference type="ChEBI" id="CHEBI:144744"/>
        <dbReference type="ChEBI" id="CHEBI:144745"/>
    </reaction>
    <physiologicalReaction direction="left-to-right" evidence="3">
        <dbReference type="Rhea" id="RHEA:63849"/>
    </physiologicalReaction>
</comment>
<comment type="activity regulation">
    <text evidence="3">Retains almost half of its activity in presence of high salt concentrations up to 100 mM NaCl (PubMed:30529567). Retains also more than 85% of its original activity in the presence of 1 mM EDTA, indicating a satisfactory resistance towards chelators, which is rare among metal-containing enzyme (PubMed:30529567). The activity drops significantly in the presence of NaN(3) or SDS (PubMed:30529567). Appears more active in the presence of methanol compared to ethanol, but acetone or DMSO addition severely affect remaining laccase activity (PubMed:30529567).</text>
</comment>
<comment type="biophysicochemical properties">
    <kinetics>
        <KM evidence="3">2.37 mM for ABTS</KM>
        <KM evidence="3">2.41 mM for 2,6-dimethoxyphenol</KM>
    </kinetics>
    <phDependence>
        <text evidence="3">Optimum pH is 4.0.</text>
    </phDependence>
    <temperatureDependence>
        <text evidence="3">Optimum temperature is 50 degrees Celsius.</text>
    </temperatureDependence>
</comment>
<comment type="subunit">
    <text evidence="4">Monomer.</text>
</comment>
<comment type="PTM">
    <text evidence="4">N-glycosylation Asn-55 and Asn-83 is involved in folding, conformational stability and laccase activity.</text>
</comment>
<comment type="biotechnology">
    <text evidence="3">The thermophilic yellow LMCO1 presents a number of superior properties with potential use in industrial biocatalysis via its ability to oxidize a variety of phenolic compounds.</text>
</comment>
<comment type="similarity">
    <text evidence="7">Belongs to the multicopper oxidase family.</text>
</comment>
<reference key="1">
    <citation type="journal article" date="2011" name="Nat. Biotechnol.">
        <title>Comparative genomic analysis of the thermophilic biomass-degrading fungi Myceliophthora thermophila and Thielavia terrestris.</title>
        <authorList>
            <person name="Berka R.M."/>
            <person name="Grigoriev I.V."/>
            <person name="Otillar R."/>
            <person name="Salamov A."/>
            <person name="Grimwood J."/>
            <person name="Reid I."/>
            <person name="Ishmael N."/>
            <person name="John T."/>
            <person name="Darmond C."/>
            <person name="Moisan M.-C."/>
            <person name="Henrissat B."/>
            <person name="Coutinho P.M."/>
            <person name="Lombard V."/>
            <person name="Natvig D.O."/>
            <person name="Lindquist E."/>
            <person name="Schmutz J."/>
            <person name="Lucas S."/>
            <person name="Harris P."/>
            <person name="Powlowski J."/>
            <person name="Bellemare A."/>
            <person name="Taylor D."/>
            <person name="Butler G."/>
            <person name="de Vries R.P."/>
            <person name="Allijn I.E."/>
            <person name="van den Brink J."/>
            <person name="Ushinsky S."/>
            <person name="Storms R."/>
            <person name="Powell A.J."/>
            <person name="Paulsen I.T."/>
            <person name="Elbourne L.D.H."/>
            <person name="Baker S.E."/>
            <person name="Magnuson J."/>
            <person name="LaBoissiere S."/>
            <person name="Clutterbuck A.J."/>
            <person name="Martinez D."/>
            <person name="Wogulis M."/>
            <person name="de Leon A.L."/>
            <person name="Rey M.W."/>
            <person name="Tsang A."/>
        </authorList>
    </citation>
    <scope>NUCLEOTIDE SEQUENCE [LARGE SCALE GENOMIC DNA]</scope>
    <source>
        <strain>ATCC 42464 / BCRC 31852 / DSM 1799</strain>
    </source>
</reference>
<reference key="2">
    <citation type="journal article" date="2019" name="New Biotechnol.">
        <title>A novel thermophilic laccase-like multicopper oxidase from Thermothelomyces thermophila and its application in the oxidative cyclization of 2',3,4-trihydroxychalcone.</title>
        <authorList>
            <person name="Zerva A."/>
            <person name="Koutroufini E."/>
            <person name="Kostopoulou I."/>
            <person name="Detsi A."/>
            <person name="Topakas E."/>
        </authorList>
    </citation>
    <scope>FUNCTION</scope>
    <scope>BIOPHYSICOCHEMICAL PROPERTIES</scope>
    <scope>CATALYTIC ACTIVITY</scope>
    <scope>ACTIVITY REGULATION</scope>
    <scope>BIOTECHNOLOGY</scope>
</reference>
<reference evidence="8" key="3">
    <citation type="journal article" date="2023" name="Acta Crystallogr. D Struct. Biol.">
        <title>Structure-function studies of a novel laccase-like multicopper oxidase from Thermothelomyces thermophila provide insights into its biological role.</title>
        <authorList>
            <person name="Kosinas C."/>
            <person name="Zerva A."/>
            <person name="Topakas E."/>
            <person name="Dimarogona M."/>
        </authorList>
    </citation>
    <scope>X-RAY CRYSTALLOGRAPHY (1.90 ANGSTROMS) IN COMPLEX WITH COPPER</scope>
    <scope>DISULFIDE BOND</scope>
    <scope>GLYCOSYLATION AT ASN-55 AND ASN-83</scope>
    <scope>SUBUNIT</scope>
    <scope>FUNCTION</scope>
    <scope>CATALYTIC ACTIVITY</scope>
</reference>
<keyword id="KW-0002">3D-structure</keyword>
<keyword id="KW-0186">Copper</keyword>
<keyword id="KW-1015">Disulfide bond</keyword>
<keyword id="KW-0325">Glycoprotein</keyword>
<keyword id="KW-0479">Metal-binding</keyword>
<keyword id="KW-0560">Oxidoreductase</keyword>
<keyword id="KW-1185">Reference proteome</keyword>
<keyword id="KW-0677">Repeat</keyword>
<keyword id="KW-0732">Signal</keyword>
<evidence type="ECO:0000255" key="1"/>
<evidence type="ECO:0000255" key="2">
    <source>
        <dbReference type="PROSITE-ProRule" id="PRU00498"/>
    </source>
</evidence>
<evidence type="ECO:0000269" key="3">
    <source>
    </source>
</evidence>
<evidence type="ECO:0000269" key="4">
    <source>
    </source>
</evidence>
<evidence type="ECO:0000303" key="5">
    <source>
    </source>
</evidence>
<evidence type="ECO:0000303" key="6">
    <source>
    </source>
</evidence>
<evidence type="ECO:0000305" key="7"/>
<evidence type="ECO:0007744" key="8">
    <source>
        <dbReference type="PDB" id="7ZN6"/>
    </source>
</evidence>
<evidence type="ECO:0007829" key="9">
    <source>
        <dbReference type="PDB" id="7ZN6"/>
    </source>
</evidence>
<proteinExistence type="evidence at protein level"/>
<accession>G2QFD0</accession>
<protein>
    <recommendedName>
        <fullName evidence="5">Laccase-like multicopper oxidase 1</fullName>
        <shortName evidence="6">LMCO</shortName>
        <ecNumber evidence="3 4">1.-.-.-</ecNumber>
    </recommendedName>
</protein>
<feature type="signal peptide" evidence="1">
    <location>
        <begin position="1"/>
        <end position="20"/>
    </location>
</feature>
<feature type="chain" id="PRO_5003435549" description="Laccase-like multicopper oxidase 1">
    <location>
        <begin position="21"/>
        <end position="650"/>
    </location>
</feature>
<feature type="domain" description="Plastocyanin-like 1" evidence="1">
    <location>
        <begin position="41"/>
        <end position="151"/>
    </location>
</feature>
<feature type="domain" description="Plastocyanin-like 2" evidence="1">
    <location>
        <begin position="162"/>
        <end position="360"/>
    </location>
</feature>
<feature type="domain" description="Plastocyanin-like 3" evidence="1">
    <location>
        <begin position="439"/>
        <end position="595"/>
    </location>
</feature>
<feature type="binding site" evidence="4 8">
    <location>
        <position position="87"/>
    </location>
    <ligand>
        <name>Cu cation</name>
        <dbReference type="ChEBI" id="CHEBI:23378"/>
        <label>1</label>
    </ligand>
</feature>
<feature type="binding site" evidence="4 8">
    <location>
        <position position="89"/>
    </location>
    <ligand>
        <name>Cu cation</name>
        <dbReference type="ChEBI" id="CHEBI:23378"/>
        <label>2</label>
    </ligand>
</feature>
<feature type="binding site" evidence="4 8">
    <location>
        <position position="133"/>
    </location>
    <ligand>
        <name>Cu cation</name>
        <dbReference type="ChEBI" id="CHEBI:23378"/>
        <label>2</label>
    </ligand>
</feature>
<feature type="binding site" evidence="4 8">
    <location>
        <position position="135"/>
    </location>
    <ligand>
        <name>Cu cation</name>
        <dbReference type="ChEBI" id="CHEBI:23378"/>
        <label>3</label>
    </ligand>
</feature>
<feature type="binding site" evidence="4 8">
    <location>
        <position position="501"/>
    </location>
    <ligand>
        <name>Cu cation</name>
        <dbReference type="ChEBI" id="CHEBI:23378"/>
        <label>4</label>
    </ligand>
</feature>
<feature type="binding site" evidence="4 8">
    <location>
        <position position="504"/>
    </location>
    <ligand>
        <name>Cu cation</name>
        <dbReference type="ChEBI" id="CHEBI:23378"/>
        <label>1</label>
    </ligand>
</feature>
<feature type="binding site" evidence="4 8">
    <location>
        <position position="506"/>
    </location>
    <ligand>
        <name>Cu cation</name>
        <dbReference type="ChEBI" id="CHEBI:23378"/>
        <label>3</label>
    </ligand>
</feature>
<feature type="binding site" evidence="4 8">
    <location>
        <position position="576"/>
    </location>
    <ligand>
        <name>Cu cation</name>
        <dbReference type="ChEBI" id="CHEBI:23378"/>
        <label>3</label>
    </ligand>
</feature>
<feature type="binding site" evidence="4 8">
    <location>
        <position position="577"/>
    </location>
    <ligand>
        <name>Cu cation</name>
        <dbReference type="ChEBI" id="CHEBI:23378"/>
        <label>4</label>
    </ligand>
</feature>
<feature type="binding site" evidence="4 8">
    <location>
        <position position="578"/>
    </location>
    <ligand>
        <name>Cu cation</name>
        <dbReference type="ChEBI" id="CHEBI:23378"/>
        <label>2</label>
    </ligand>
</feature>
<feature type="binding site" evidence="4 8">
    <location>
        <position position="582"/>
    </location>
    <ligand>
        <name>Cu cation</name>
        <dbReference type="ChEBI" id="CHEBI:23378"/>
        <label>4</label>
    </ligand>
</feature>
<feature type="glycosylation site" description="N-linked (GlcNAc...) asparagine" evidence="2 4 8">
    <location>
        <position position="55"/>
    </location>
</feature>
<feature type="glycosylation site" description="N-linked (GlcNAc...) asparagine" evidence="2 4 8">
    <location>
        <position position="83"/>
    </location>
</feature>
<feature type="glycosylation site" description="N-linked (GlcNAc...) asparagine" evidence="2">
    <location>
        <position position="620"/>
    </location>
</feature>
<feature type="disulfide bond" evidence="4 8">
    <location>
        <begin position="46"/>
        <end position="254"/>
    </location>
</feature>
<feature type="strand" evidence="9">
    <location>
        <begin position="32"/>
        <end position="44"/>
    </location>
</feature>
<feature type="strand" evidence="9">
    <location>
        <begin position="47"/>
        <end position="54"/>
    </location>
</feature>
<feature type="strand" evidence="9">
    <location>
        <begin position="57"/>
        <end position="59"/>
    </location>
</feature>
<feature type="strand" evidence="9">
    <location>
        <begin position="63"/>
        <end position="65"/>
    </location>
</feature>
<feature type="strand" evidence="9">
    <location>
        <begin position="70"/>
        <end position="77"/>
    </location>
</feature>
<feature type="strand" evidence="9">
    <location>
        <begin position="87"/>
        <end position="89"/>
    </location>
</feature>
<feature type="helix" evidence="9">
    <location>
        <begin position="97"/>
        <end position="99"/>
    </location>
</feature>
<feature type="turn" evidence="9">
    <location>
        <begin position="103"/>
        <end position="105"/>
    </location>
</feature>
<feature type="strand" evidence="9">
    <location>
        <begin position="115"/>
        <end position="121"/>
    </location>
</feature>
<feature type="strand" evidence="9">
    <location>
        <begin position="128"/>
        <end position="133"/>
    </location>
</feature>
<feature type="helix" evidence="9">
    <location>
        <begin position="139"/>
        <end position="141"/>
    </location>
</feature>
<feature type="strand" evidence="9">
    <location>
        <begin position="143"/>
        <end position="149"/>
    </location>
</feature>
<feature type="strand" evidence="9">
    <location>
        <begin position="160"/>
        <end position="169"/>
    </location>
</feature>
<feature type="helix" evidence="9">
    <location>
        <begin position="175"/>
        <end position="183"/>
    </location>
</feature>
<feature type="strand" evidence="9">
    <location>
        <begin position="184"/>
        <end position="186"/>
    </location>
</feature>
<feature type="strand" evidence="9">
    <location>
        <begin position="196"/>
        <end position="198"/>
    </location>
</feature>
<feature type="turn" evidence="9">
    <location>
        <begin position="219"/>
        <end position="222"/>
    </location>
</feature>
<feature type="helix" evidence="9">
    <location>
        <begin position="244"/>
        <end position="246"/>
    </location>
</feature>
<feature type="strand" evidence="9">
    <location>
        <begin position="252"/>
        <end position="254"/>
    </location>
</feature>
<feature type="strand" evidence="9">
    <location>
        <begin position="258"/>
        <end position="260"/>
    </location>
</feature>
<feature type="strand" evidence="9">
    <location>
        <begin position="266"/>
        <end position="273"/>
    </location>
</feature>
<feature type="strand" evidence="9">
    <location>
        <begin position="279"/>
        <end position="284"/>
    </location>
</feature>
<feature type="strand" evidence="9">
    <location>
        <begin position="290"/>
        <end position="295"/>
    </location>
</feature>
<feature type="turn" evidence="9">
    <location>
        <begin position="296"/>
        <end position="298"/>
    </location>
</feature>
<feature type="strand" evidence="9">
    <location>
        <begin position="299"/>
        <end position="307"/>
    </location>
</feature>
<feature type="strand" evidence="9">
    <location>
        <begin position="309"/>
        <end position="311"/>
    </location>
</feature>
<feature type="strand" evidence="9">
    <location>
        <begin position="316"/>
        <end position="322"/>
    </location>
</feature>
<feature type="helix" evidence="9">
    <location>
        <begin position="326"/>
        <end position="331"/>
    </location>
</feature>
<feature type="strand" evidence="9">
    <location>
        <begin position="337"/>
        <end position="349"/>
    </location>
</feature>
<feature type="strand" evidence="9">
    <location>
        <begin position="352"/>
        <end position="359"/>
    </location>
</feature>
<feature type="strand" evidence="9">
    <location>
        <begin position="383"/>
        <end position="386"/>
    </location>
</feature>
<feature type="strand" evidence="9">
    <location>
        <begin position="390"/>
        <end position="392"/>
    </location>
</feature>
<feature type="helix" evidence="9">
    <location>
        <begin position="393"/>
        <end position="395"/>
    </location>
</feature>
<feature type="turn" evidence="9">
    <location>
        <begin position="401"/>
        <end position="403"/>
    </location>
</feature>
<feature type="strand" evidence="9">
    <location>
        <begin position="406"/>
        <end position="416"/>
    </location>
</feature>
<feature type="turn" evidence="9">
    <location>
        <begin position="418"/>
        <end position="420"/>
    </location>
</feature>
<feature type="strand" evidence="9">
    <location>
        <begin position="423"/>
        <end position="427"/>
    </location>
</feature>
<feature type="helix" evidence="9">
    <location>
        <begin position="441"/>
        <end position="448"/>
    </location>
</feature>
<feature type="helix" evidence="9">
    <location>
        <begin position="449"/>
        <end position="452"/>
    </location>
</feature>
<feature type="helix" evidence="9">
    <location>
        <begin position="456"/>
        <end position="460"/>
    </location>
</feature>
<feature type="turn" evidence="9">
    <location>
        <begin position="461"/>
        <end position="464"/>
    </location>
</feature>
<feature type="turn" evidence="9">
    <location>
        <begin position="467"/>
        <end position="469"/>
    </location>
</feature>
<feature type="strand" evidence="9">
    <location>
        <begin position="472"/>
        <end position="474"/>
    </location>
</feature>
<feature type="strand" evidence="9">
    <location>
        <begin position="479"/>
        <end position="488"/>
    </location>
</feature>
<feature type="strand" evidence="9">
    <location>
        <begin position="501"/>
        <end position="508"/>
    </location>
</feature>
<feature type="strand" evidence="9">
    <location>
        <begin position="510"/>
        <end position="519"/>
    </location>
</feature>
<feature type="helix" evidence="9">
    <location>
        <begin position="522"/>
        <end position="532"/>
    </location>
</feature>
<feature type="strand" evidence="9">
    <location>
        <begin position="538"/>
        <end position="544"/>
    </location>
</feature>
<feature type="strand" evidence="9">
    <location>
        <begin position="557"/>
        <end position="566"/>
    </location>
</feature>
<feature type="strand" evidence="9">
    <location>
        <begin position="571"/>
        <end position="578"/>
    </location>
</feature>
<feature type="helix" evidence="9">
    <location>
        <begin position="580"/>
        <end position="584"/>
    </location>
</feature>
<feature type="strand" evidence="9">
    <location>
        <begin position="588"/>
        <end position="594"/>
    </location>
</feature>
<feature type="helix" evidence="9">
    <location>
        <begin position="596"/>
        <end position="600"/>
    </location>
</feature>
<feature type="helix" evidence="9">
    <location>
        <begin position="608"/>
        <end position="611"/>
    </location>
</feature>
<feature type="strand" evidence="9">
    <location>
        <begin position="612"/>
        <end position="615"/>
    </location>
</feature>
<gene>
    <name evidence="6" type="primary">LMCO1</name>
    <name type="ORF">MYCTH_2063133</name>
</gene>
<name>LMCO1_THET4</name>
<organism>
    <name type="scientific">Thermothelomyces thermophilus (strain ATCC 42464 / BCRC 31852 / DSM 1799)</name>
    <name type="common">Sporotrichum thermophile</name>
    <dbReference type="NCBI Taxonomy" id="573729"/>
    <lineage>
        <taxon>Eukaryota</taxon>
        <taxon>Fungi</taxon>
        <taxon>Dikarya</taxon>
        <taxon>Ascomycota</taxon>
        <taxon>Pezizomycotina</taxon>
        <taxon>Sordariomycetes</taxon>
        <taxon>Sordariomycetidae</taxon>
        <taxon>Sordariales</taxon>
        <taxon>Chaetomiaceae</taxon>
        <taxon>Thermothelomyces</taxon>
    </lineage>
</organism>
<sequence>MLLSKLSILLAKWLSVAVYAGTLVHDEQFIPDHILRVSVAQVPSACENREDVVVNGTSPGPAIHLLPGARTWIRVYNDMNDRNLSMHWHGLSQRFAPFSDGTPSATQWPIPPGHFFDYEILTEPEDAGTYFYHSHVGMQALSCTGPLIVEDCGSSPYHYDDERILLFQDHFQKSDLEMIQGLTSTQFTWTGETRGILLNGRGVSPNQAAVQGRPGEASGFFGSHRFSNFRAGDGTSNSWDGIRGDDQIEPPTDCTLPVIDVEPGKTYRLRFIGATGLSLLTMGFEDHNDLTIVQVDGSEYNAPVTVDHIQLGGGQRFDVLLRTKTAEELRCNGDKTTYFLQFETRDRPDPYRGYGVLRYNLGTPVPAAPTTPALTLPAEVNNWLEYTFQPLHPSSSLSPTAEEVTRRVILEAEQKIDPATGRLVWKLAHMTWTDMSRDKPVLVDIYERGEAAMPDYAAALTNYGWDPATKLFPAKKDEVLEIVIQNTGSHYSGASGIVETHPFHAHGQHFYDVGSGPGKYDPEANNAKLASLGYRPIKRDTTMVYRYGEGKVAPGEPAGWRAWRMKMNNPGVWMVHCHILAHMIMGMETIWVVGDAEDIVTIPLSVSQNYFTYGGSVYGNDTHAPEVYHYFDDTNKCCAAGAGDSEDSGH</sequence>
<dbReference type="EC" id="1.-.-.-" evidence="3 4"/>
<dbReference type="EMBL" id="CP003005">
    <property type="protein sequence ID" value="AEO59159.1"/>
    <property type="molecule type" value="Genomic_DNA"/>
</dbReference>
<dbReference type="RefSeq" id="XP_003664404.1">
    <property type="nucleotide sequence ID" value="XM_003664356.1"/>
</dbReference>
<dbReference type="PDB" id="7ZN6">
    <property type="method" value="X-ray"/>
    <property type="resolution" value="1.90 A"/>
    <property type="chains" value="A=21-650"/>
</dbReference>
<dbReference type="PDBsum" id="7ZN6"/>
<dbReference type="SMR" id="G2QFD0"/>
<dbReference type="STRING" id="573729.G2QFD0"/>
<dbReference type="GlyCosmos" id="G2QFD0">
    <property type="glycosylation" value="3 sites, No reported glycans"/>
</dbReference>
<dbReference type="iPTMnet" id="G2QFD0"/>
<dbReference type="GeneID" id="11514269"/>
<dbReference type="KEGG" id="mtm:MYCTH_2063133"/>
<dbReference type="VEuPathDB" id="FungiDB:MYCTH_2063133"/>
<dbReference type="eggNOG" id="KOG1263">
    <property type="taxonomic scope" value="Eukaryota"/>
</dbReference>
<dbReference type="HOGENOM" id="CLU_006504_8_3_1"/>
<dbReference type="InParanoid" id="G2QFD0"/>
<dbReference type="OMA" id="QWPIAPH"/>
<dbReference type="OrthoDB" id="2121828at2759"/>
<dbReference type="Proteomes" id="UP000007322">
    <property type="component" value="Chromosome 4"/>
</dbReference>
<dbReference type="GO" id="GO:0005507">
    <property type="term" value="F:copper ion binding"/>
    <property type="evidence" value="ECO:0007669"/>
    <property type="project" value="InterPro"/>
</dbReference>
<dbReference type="GO" id="GO:0016491">
    <property type="term" value="F:oxidoreductase activity"/>
    <property type="evidence" value="ECO:0007669"/>
    <property type="project" value="UniProtKB-KW"/>
</dbReference>
<dbReference type="CDD" id="cd13873">
    <property type="entry name" value="CuRO_2_AAO_like_2"/>
    <property type="match status" value="1"/>
</dbReference>
<dbReference type="CDD" id="cd13895">
    <property type="entry name" value="CuRO_3_AAO_like_2"/>
    <property type="match status" value="1"/>
</dbReference>
<dbReference type="Gene3D" id="2.60.40.420">
    <property type="entry name" value="Cupredoxins - blue copper proteins"/>
    <property type="match status" value="3"/>
</dbReference>
<dbReference type="InterPro" id="IPR011707">
    <property type="entry name" value="Cu-oxidase-like_N"/>
</dbReference>
<dbReference type="InterPro" id="IPR001117">
    <property type="entry name" value="Cu-oxidase_2nd"/>
</dbReference>
<dbReference type="InterPro" id="IPR011706">
    <property type="entry name" value="Cu-oxidase_C"/>
</dbReference>
<dbReference type="InterPro" id="IPR045087">
    <property type="entry name" value="Cu-oxidase_fam"/>
</dbReference>
<dbReference type="InterPro" id="IPR033138">
    <property type="entry name" value="Cu_oxidase_CS"/>
</dbReference>
<dbReference type="InterPro" id="IPR002355">
    <property type="entry name" value="Cu_oxidase_Cu_BS"/>
</dbReference>
<dbReference type="InterPro" id="IPR008972">
    <property type="entry name" value="Cupredoxin"/>
</dbReference>
<dbReference type="InterPro" id="IPR035666">
    <property type="entry name" value="MCO_CuRO_3"/>
</dbReference>
<dbReference type="InterPro" id="IPR017762">
    <property type="entry name" value="Multicopper_oxidase_fun"/>
</dbReference>
<dbReference type="NCBIfam" id="TIGR03390">
    <property type="entry name" value="ascorbOXfungal"/>
    <property type="match status" value="1"/>
</dbReference>
<dbReference type="PANTHER" id="PTHR11709:SF394">
    <property type="entry name" value="FI03373P-RELATED"/>
    <property type="match status" value="1"/>
</dbReference>
<dbReference type="PANTHER" id="PTHR11709">
    <property type="entry name" value="MULTI-COPPER OXIDASE"/>
    <property type="match status" value="1"/>
</dbReference>
<dbReference type="Pfam" id="PF00394">
    <property type="entry name" value="Cu-oxidase"/>
    <property type="match status" value="1"/>
</dbReference>
<dbReference type="Pfam" id="PF07731">
    <property type="entry name" value="Cu-oxidase_2"/>
    <property type="match status" value="1"/>
</dbReference>
<dbReference type="Pfam" id="PF07732">
    <property type="entry name" value="Cu-oxidase_3"/>
    <property type="match status" value="1"/>
</dbReference>
<dbReference type="SUPFAM" id="SSF49503">
    <property type="entry name" value="Cupredoxins"/>
    <property type="match status" value="3"/>
</dbReference>
<dbReference type="PROSITE" id="PS00079">
    <property type="entry name" value="MULTICOPPER_OXIDASE1"/>
    <property type="match status" value="1"/>
</dbReference>
<dbReference type="PROSITE" id="PS00080">
    <property type="entry name" value="MULTICOPPER_OXIDASE2"/>
    <property type="match status" value="1"/>
</dbReference>